<gene>
    <name type="ordered locus">SA2005</name>
</gene>
<evidence type="ECO:0000305" key="1"/>
<name>Y2005_STAAN</name>
<feature type="chain" id="PRO_0000296089" description="Uncharacterized hydrolase SA2005">
    <location>
        <begin position="1"/>
        <end position="271"/>
    </location>
</feature>
<keyword id="KW-0378">Hydrolase</keyword>
<accession>Q7A484</accession>
<proteinExistence type="evidence at protein level"/>
<protein>
    <recommendedName>
        <fullName>Uncharacterized hydrolase SA2005</fullName>
        <ecNumber>3.-.-.-</ecNumber>
    </recommendedName>
</protein>
<organism>
    <name type="scientific">Staphylococcus aureus (strain N315)</name>
    <dbReference type="NCBI Taxonomy" id="158879"/>
    <lineage>
        <taxon>Bacteria</taxon>
        <taxon>Bacillati</taxon>
        <taxon>Bacillota</taxon>
        <taxon>Bacilli</taxon>
        <taxon>Bacillales</taxon>
        <taxon>Staphylococcaceae</taxon>
        <taxon>Staphylococcus</taxon>
    </lineage>
</organism>
<comment type="similarity">
    <text evidence="1">Belongs to the HAD-like hydrolase superfamily.</text>
</comment>
<dbReference type="EC" id="3.-.-.-"/>
<dbReference type="EMBL" id="BA000018">
    <property type="protein sequence ID" value="BAB43296.1"/>
    <property type="molecule type" value="Genomic_DNA"/>
</dbReference>
<dbReference type="PIR" id="G90016">
    <property type="entry name" value="G90016"/>
</dbReference>
<dbReference type="RefSeq" id="WP_000044362.1">
    <property type="nucleotide sequence ID" value="NC_002745.2"/>
</dbReference>
<dbReference type="SMR" id="Q7A484"/>
<dbReference type="EnsemblBacteria" id="BAB43296">
    <property type="protein sequence ID" value="BAB43296"/>
    <property type="gene ID" value="BAB43296"/>
</dbReference>
<dbReference type="KEGG" id="sau:SA2005"/>
<dbReference type="HOGENOM" id="CLU_084693_0_0_9"/>
<dbReference type="GO" id="GO:0005829">
    <property type="term" value="C:cytosol"/>
    <property type="evidence" value="ECO:0007669"/>
    <property type="project" value="TreeGrafter"/>
</dbReference>
<dbReference type="GO" id="GO:0000287">
    <property type="term" value="F:magnesium ion binding"/>
    <property type="evidence" value="ECO:0007669"/>
    <property type="project" value="TreeGrafter"/>
</dbReference>
<dbReference type="GO" id="GO:0016791">
    <property type="term" value="F:phosphatase activity"/>
    <property type="evidence" value="ECO:0007669"/>
    <property type="project" value="TreeGrafter"/>
</dbReference>
<dbReference type="CDD" id="cd02605">
    <property type="entry name" value="HAD_SPP"/>
    <property type="match status" value="1"/>
</dbReference>
<dbReference type="Gene3D" id="3.40.50.1000">
    <property type="entry name" value="HAD superfamily/HAD-like"/>
    <property type="match status" value="1"/>
</dbReference>
<dbReference type="Gene3D" id="3.30.70.1410">
    <property type="entry name" value="yhjk (haloacid dehalogenase-like hydrolase protein) domain"/>
    <property type="match status" value="1"/>
</dbReference>
<dbReference type="InterPro" id="IPR036412">
    <property type="entry name" value="HAD-like_sf"/>
</dbReference>
<dbReference type="InterPro" id="IPR006379">
    <property type="entry name" value="HAD-SF_hydro_IIB"/>
</dbReference>
<dbReference type="InterPro" id="IPR023214">
    <property type="entry name" value="HAD_sf"/>
</dbReference>
<dbReference type="InterPro" id="IPR006380">
    <property type="entry name" value="SPP-like_dom"/>
</dbReference>
<dbReference type="NCBIfam" id="TIGR01484">
    <property type="entry name" value="HAD-SF-IIB"/>
    <property type="match status" value="1"/>
</dbReference>
<dbReference type="PANTHER" id="PTHR10000:SF57">
    <property type="entry name" value="KANOSAMINE-6-PHOSPHATE PHOSPHATASE"/>
    <property type="match status" value="1"/>
</dbReference>
<dbReference type="PANTHER" id="PTHR10000">
    <property type="entry name" value="PHOSPHOSERINE PHOSPHATASE"/>
    <property type="match status" value="1"/>
</dbReference>
<dbReference type="Pfam" id="PF05116">
    <property type="entry name" value="S6PP"/>
    <property type="match status" value="1"/>
</dbReference>
<dbReference type="SFLD" id="SFLDG01141">
    <property type="entry name" value="C2.B.1:_Sucrose_Phosphatase_Li"/>
    <property type="match status" value="1"/>
</dbReference>
<dbReference type="SFLD" id="SFLDG01140">
    <property type="entry name" value="C2.B:_Phosphomannomutase_and_P"/>
    <property type="match status" value="1"/>
</dbReference>
<dbReference type="SUPFAM" id="SSF56784">
    <property type="entry name" value="HAD-like"/>
    <property type="match status" value="1"/>
</dbReference>
<sequence length="271" mass="31809">MSKRLLLFDFDETYFKHNTNEEDLSHLREMEKLLEKLTNNNEVITAVLTGSTFQSVMDKMDQVNMTFKPLHIFSDLSSKMFTWNNGEYVESETYKKKVLSEPFLFEDIEDILRHISAQYNVEFIPQRAFEGNETHYNFYFHSTGNHNNDSRILEALVRYANDQNYTARFSRSNPLAGDPENAYDIDFTPSNAGKLYATQFLMKKYNIPVKSILGFGDSGNDEAYLSYLEHAYLMSNSRDEALKQKFRLTKYPYYQGITLHVKEFVEGKYDY</sequence>
<reference key="1">
    <citation type="journal article" date="2001" name="Lancet">
        <title>Whole genome sequencing of meticillin-resistant Staphylococcus aureus.</title>
        <authorList>
            <person name="Kuroda M."/>
            <person name="Ohta T."/>
            <person name="Uchiyama I."/>
            <person name="Baba T."/>
            <person name="Yuzawa H."/>
            <person name="Kobayashi I."/>
            <person name="Cui L."/>
            <person name="Oguchi A."/>
            <person name="Aoki K."/>
            <person name="Nagai Y."/>
            <person name="Lian J.-Q."/>
            <person name="Ito T."/>
            <person name="Kanamori M."/>
            <person name="Matsumaru H."/>
            <person name="Maruyama A."/>
            <person name="Murakami H."/>
            <person name="Hosoyama A."/>
            <person name="Mizutani-Ui Y."/>
            <person name="Takahashi N.K."/>
            <person name="Sawano T."/>
            <person name="Inoue R."/>
            <person name="Kaito C."/>
            <person name="Sekimizu K."/>
            <person name="Hirakawa H."/>
            <person name="Kuhara S."/>
            <person name="Goto S."/>
            <person name="Yabuzaki J."/>
            <person name="Kanehisa M."/>
            <person name="Yamashita A."/>
            <person name="Oshima K."/>
            <person name="Furuya K."/>
            <person name="Yoshino C."/>
            <person name="Shiba T."/>
            <person name="Hattori M."/>
            <person name="Ogasawara N."/>
            <person name="Hayashi H."/>
            <person name="Hiramatsu K."/>
        </authorList>
    </citation>
    <scope>NUCLEOTIDE SEQUENCE [LARGE SCALE GENOMIC DNA]</scope>
    <source>
        <strain>N315</strain>
    </source>
</reference>
<reference key="2">
    <citation type="submission" date="2007-10" db="UniProtKB">
        <title>Shotgun proteomic analysis of total and membrane protein extracts of S. aureus strain N315.</title>
        <authorList>
            <person name="Vaezzadeh A.R."/>
            <person name="Deshusses J."/>
            <person name="Lescuyer P."/>
            <person name="Hochstrasser D.F."/>
        </authorList>
    </citation>
    <scope>IDENTIFICATION BY MASS SPECTROMETRY [LARGE SCALE ANALYSIS]</scope>
    <source>
        <strain>N315</strain>
    </source>
</reference>